<name>HUTI_YERPY</name>
<keyword id="KW-0963">Cytoplasm</keyword>
<keyword id="KW-0369">Histidine metabolism</keyword>
<keyword id="KW-0378">Hydrolase</keyword>
<keyword id="KW-0408">Iron</keyword>
<keyword id="KW-0479">Metal-binding</keyword>
<keyword id="KW-0862">Zinc</keyword>
<comment type="function">
    <text evidence="1">Catalyzes the hydrolytic cleavage of the carbon-nitrogen bond in imidazolone-5-propanoate to yield N-formimidoyl-L-glutamate. It is the third step in the universal histidine degradation pathway.</text>
</comment>
<comment type="catalytic activity">
    <reaction evidence="1">
        <text>4-imidazolone-5-propanoate + H2O = N-formimidoyl-L-glutamate</text>
        <dbReference type="Rhea" id="RHEA:23660"/>
        <dbReference type="ChEBI" id="CHEBI:15377"/>
        <dbReference type="ChEBI" id="CHEBI:58928"/>
        <dbReference type="ChEBI" id="CHEBI:77893"/>
        <dbReference type="EC" id="3.5.2.7"/>
    </reaction>
</comment>
<comment type="cofactor">
    <cofactor evidence="1">
        <name>Zn(2+)</name>
        <dbReference type="ChEBI" id="CHEBI:29105"/>
    </cofactor>
    <cofactor evidence="1">
        <name>Fe(3+)</name>
        <dbReference type="ChEBI" id="CHEBI:29034"/>
    </cofactor>
    <text evidence="1">Binds 1 zinc or iron ion per subunit.</text>
</comment>
<comment type="pathway">
    <text evidence="1">Amino-acid degradation; L-histidine degradation into L-glutamate; N-formimidoyl-L-glutamate from L-histidine: step 3/3.</text>
</comment>
<comment type="subcellular location">
    <subcellularLocation>
        <location evidence="1">Cytoplasm</location>
    </subcellularLocation>
</comment>
<comment type="similarity">
    <text evidence="1">Belongs to the metallo-dependent hydrolases superfamily. HutI family.</text>
</comment>
<feature type="chain" id="PRO_1000121565" description="Imidazolonepropionase">
    <location>
        <begin position="1"/>
        <end position="406"/>
    </location>
</feature>
<feature type="binding site" evidence="1">
    <location>
        <position position="72"/>
    </location>
    <ligand>
        <name>Fe(3+)</name>
        <dbReference type="ChEBI" id="CHEBI:29034"/>
    </ligand>
</feature>
<feature type="binding site" evidence="1">
    <location>
        <position position="72"/>
    </location>
    <ligand>
        <name>Zn(2+)</name>
        <dbReference type="ChEBI" id="CHEBI:29105"/>
    </ligand>
</feature>
<feature type="binding site" evidence="1">
    <location>
        <position position="74"/>
    </location>
    <ligand>
        <name>Fe(3+)</name>
        <dbReference type="ChEBI" id="CHEBI:29034"/>
    </ligand>
</feature>
<feature type="binding site" evidence="1">
    <location>
        <position position="74"/>
    </location>
    <ligand>
        <name>Zn(2+)</name>
        <dbReference type="ChEBI" id="CHEBI:29105"/>
    </ligand>
</feature>
<feature type="binding site" evidence="1">
    <location>
        <position position="81"/>
    </location>
    <ligand>
        <name>4-imidazolone-5-propanoate</name>
        <dbReference type="ChEBI" id="CHEBI:77893"/>
    </ligand>
</feature>
<feature type="binding site" evidence="1">
    <location>
        <position position="144"/>
    </location>
    <ligand>
        <name>4-imidazolone-5-propanoate</name>
        <dbReference type="ChEBI" id="CHEBI:77893"/>
    </ligand>
</feature>
<feature type="binding site" evidence="1">
    <location>
        <position position="144"/>
    </location>
    <ligand>
        <name>N-formimidoyl-L-glutamate</name>
        <dbReference type="ChEBI" id="CHEBI:58928"/>
    </ligand>
</feature>
<feature type="binding site" evidence="1">
    <location>
        <position position="177"/>
    </location>
    <ligand>
        <name>4-imidazolone-5-propanoate</name>
        <dbReference type="ChEBI" id="CHEBI:77893"/>
    </ligand>
</feature>
<feature type="binding site" evidence="1">
    <location>
        <position position="242"/>
    </location>
    <ligand>
        <name>Fe(3+)</name>
        <dbReference type="ChEBI" id="CHEBI:29034"/>
    </ligand>
</feature>
<feature type="binding site" evidence="1">
    <location>
        <position position="242"/>
    </location>
    <ligand>
        <name>Zn(2+)</name>
        <dbReference type="ChEBI" id="CHEBI:29105"/>
    </ligand>
</feature>
<feature type="binding site" evidence="1">
    <location>
        <position position="245"/>
    </location>
    <ligand>
        <name>4-imidazolone-5-propanoate</name>
        <dbReference type="ChEBI" id="CHEBI:77893"/>
    </ligand>
</feature>
<feature type="binding site" evidence="1">
    <location>
        <position position="317"/>
    </location>
    <ligand>
        <name>Fe(3+)</name>
        <dbReference type="ChEBI" id="CHEBI:29034"/>
    </ligand>
</feature>
<feature type="binding site" evidence="1">
    <location>
        <position position="317"/>
    </location>
    <ligand>
        <name>Zn(2+)</name>
        <dbReference type="ChEBI" id="CHEBI:29105"/>
    </ligand>
</feature>
<feature type="binding site" evidence="1">
    <location>
        <position position="319"/>
    </location>
    <ligand>
        <name>N-formimidoyl-L-glutamate</name>
        <dbReference type="ChEBI" id="CHEBI:58928"/>
    </ligand>
</feature>
<feature type="binding site" evidence="1">
    <location>
        <position position="321"/>
    </location>
    <ligand>
        <name>N-formimidoyl-L-glutamate</name>
        <dbReference type="ChEBI" id="CHEBI:58928"/>
    </ligand>
</feature>
<feature type="binding site" evidence="1">
    <location>
        <position position="322"/>
    </location>
    <ligand>
        <name>4-imidazolone-5-propanoate</name>
        <dbReference type="ChEBI" id="CHEBI:77893"/>
    </ligand>
</feature>
<sequence length="406" mass="43763">MVSVTHCDSLWFGADIITMRGGNYQLIPQGAIAVTGDKIVWIGPHAELPPIHAARQVVYEGGLITPGLIDCHTHLVFGGDRSNEFEQRLNGVSYAEIAANGGGIISTVRATRQASEQQLLEQALFRLKPLLAEGVTTIEIKSGYGLNLESEIKMLRVARRLGELLPIDVKTTCLAAHALPPEFIGQPDDYIDVVCNSIIPQVAVENLADAVDAFCEHLAFSPAQVERVFLAAQKAGLPVKLHAEQLSALRGATLAAKFHAISADHLEYATESDVQAMANAGTVAVLLPGAYYLLRETQCPPIDLFRQYKVPMALASDANPGTSPVLSLRLMLNMACTLFRMTPEEALAGVTCHAAQALGVQQTQGTLETGKLANWVHWPLSHPAELAYWLGGQLPATVVFRGEVRP</sequence>
<evidence type="ECO:0000255" key="1">
    <source>
        <dbReference type="HAMAP-Rule" id="MF_00372"/>
    </source>
</evidence>
<gene>
    <name evidence="1" type="primary">hutI</name>
    <name type="ordered locus">YPK_2222</name>
</gene>
<accession>B1JMC6</accession>
<organism>
    <name type="scientific">Yersinia pseudotuberculosis serotype O:3 (strain YPIII)</name>
    <dbReference type="NCBI Taxonomy" id="502800"/>
    <lineage>
        <taxon>Bacteria</taxon>
        <taxon>Pseudomonadati</taxon>
        <taxon>Pseudomonadota</taxon>
        <taxon>Gammaproteobacteria</taxon>
        <taxon>Enterobacterales</taxon>
        <taxon>Yersiniaceae</taxon>
        <taxon>Yersinia</taxon>
    </lineage>
</organism>
<proteinExistence type="inferred from homology"/>
<reference key="1">
    <citation type="submission" date="2008-02" db="EMBL/GenBank/DDBJ databases">
        <title>Complete sequence of Yersinia pseudotuberculosis YPIII.</title>
        <authorList>
            <consortium name="US DOE Joint Genome Institute"/>
            <person name="Copeland A."/>
            <person name="Lucas S."/>
            <person name="Lapidus A."/>
            <person name="Glavina del Rio T."/>
            <person name="Dalin E."/>
            <person name="Tice H."/>
            <person name="Bruce D."/>
            <person name="Goodwin L."/>
            <person name="Pitluck S."/>
            <person name="Munk A.C."/>
            <person name="Brettin T."/>
            <person name="Detter J.C."/>
            <person name="Han C."/>
            <person name="Tapia R."/>
            <person name="Schmutz J."/>
            <person name="Larimer F."/>
            <person name="Land M."/>
            <person name="Hauser L."/>
            <person name="Challacombe J.F."/>
            <person name="Green L."/>
            <person name="Lindler L.E."/>
            <person name="Nikolich M.P."/>
            <person name="Richardson P."/>
        </authorList>
    </citation>
    <scope>NUCLEOTIDE SEQUENCE [LARGE SCALE GENOMIC DNA]</scope>
    <source>
        <strain>YPIII</strain>
    </source>
</reference>
<protein>
    <recommendedName>
        <fullName evidence="1">Imidazolonepropionase</fullName>
        <ecNumber evidence="1">3.5.2.7</ecNumber>
    </recommendedName>
    <alternativeName>
        <fullName evidence="1">Imidazolone-5-propionate hydrolase</fullName>
    </alternativeName>
</protein>
<dbReference type="EC" id="3.5.2.7" evidence="1"/>
<dbReference type="EMBL" id="CP000950">
    <property type="protein sequence ID" value="ACA68503.1"/>
    <property type="molecule type" value="Genomic_DNA"/>
</dbReference>
<dbReference type="RefSeq" id="WP_012304136.1">
    <property type="nucleotide sequence ID" value="NZ_CP009792.1"/>
</dbReference>
<dbReference type="SMR" id="B1JMC6"/>
<dbReference type="KEGG" id="ypy:YPK_2222"/>
<dbReference type="PATRIC" id="fig|502800.11.peg.2897"/>
<dbReference type="UniPathway" id="UPA00379">
    <property type="reaction ID" value="UER00551"/>
</dbReference>
<dbReference type="GO" id="GO:0005737">
    <property type="term" value="C:cytoplasm"/>
    <property type="evidence" value="ECO:0007669"/>
    <property type="project" value="UniProtKB-SubCell"/>
</dbReference>
<dbReference type="GO" id="GO:0050480">
    <property type="term" value="F:imidazolonepropionase activity"/>
    <property type="evidence" value="ECO:0007669"/>
    <property type="project" value="UniProtKB-UniRule"/>
</dbReference>
<dbReference type="GO" id="GO:0005506">
    <property type="term" value="F:iron ion binding"/>
    <property type="evidence" value="ECO:0007669"/>
    <property type="project" value="UniProtKB-UniRule"/>
</dbReference>
<dbReference type="GO" id="GO:0008270">
    <property type="term" value="F:zinc ion binding"/>
    <property type="evidence" value="ECO:0007669"/>
    <property type="project" value="UniProtKB-UniRule"/>
</dbReference>
<dbReference type="GO" id="GO:0019556">
    <property type="term" value="P:L-histidine catabolic process to glutamate and formamide"/>
    <property type="evidence" value="ECO:0007669"/>
    <property type="project" value="UniProtKB-UniPathway"/>
</dbReference>
<dbReference type="GO" id="GO:0019557">
    <property type="term" value="P:L-histidine catabolic process to glutamate and formate"/>
    <property type="evidence" value="ECO:0007669"/>
    <property type="project" value="UniProtKB-UniPathway"/>
</dbReference>
<dbReference type="CDD" id="cd01296">
    <property type="entry name" value="Imidazolone-5PH"/>
    <property type="match status" value="1"/>
</dbReference>
<dbReference type="FunFam" id="3.20.20.140:FF:000007">
    <property type="entry name" value="Imidazolonepropionase"/>
    <property type="match status" value="1"/>
</dbReference>
<dbReference type="Gene3D" id="3.20.20.140">
    <property type="entry name" value="Metal-dependent hydrolases"/>
    <property type="match status" value="1"/>
</dbReference>
<dbReference type="Gene3D" id="2.30.40.10">
    <property type="entry name" value="Urease, subunit C, domain 1"/>
    <property type="match status" value="1"/>
</dbReference>
<dbReference type="HAMAP" id="MF_00372">
    <property type="entry name" value="HutI"/>
    <property type="match status" value="1"/>
</dbReference>
<dbReference type="InterPro" id="IPR006680">
    <property type="entry name" value="Amidohydro-rel"/>
</dbReference>
<dbReference type="InterPro" id="IPR005920">
    <property type="entry name" value="HutI"/>
</dbReference>
<dbReference type="InterPro" id="IPR011059">
    <property type="entry name" value="Metal-dep_hydrolase_composite"/>
</dbReference>
<dbReference type="InterPro" id="IPR032466">
    <property type="entry name" value="Metal_Hydrolase"/>
</dbReference>
<dbReference type="NCBIfam" id="TIGR01224">
    <property type="entry name" value="hutI"/>
    <property type="match status" value="1"/>
</dbReference>
<dbReference type="PANTHER" id="PTHR42752">
    <property type="entry name" value="IMIDAZOLONEPROPIONASE"/>
    <property type="match status" value="1"/>
</dbReference>
<dbReference type="PANTHER" id="PTHR42752:SF1">
    <property type="entry name" value="IMIDAZOLONEPROPIONASE-RELATED"/>
    <property type="match status" value="1"/>
</dbReference>
<dbReference type="Pfam" id="PF01979">
    <property type="entry name" value="Amidohydro_1"/>
    <property type="match status" value="1"/>
</dbReference>
<dbReference type="SUPFAM" id="SSF51338">
    <property type="entry name" value="Composite domain of metallo-dependent hydrolases"/>
    <property type="match status" value="1"/>
</dbReference>
<dbReference type="SUPFAM" id="SSF51556">
    <property type="entry name" value="Metallo-dependent hydrolases"/>
    <property type="match status" value="1"/>
</dbReference>